<protein>
    <recommendedName>
        <fullName evidence="8">Receptor-type guanylate cyclase gcy-20</fullName>
        <ecNumber evidence="1">4.6.1.2</ecNumber>
    </recommendedName>
</protein>
<organism evidence="10">
    <name type="scientific">Caenorhabditis elegans</name>
    <dbReference type="NCBI Taxonomy" id="6239"/>
    <lineage>
        <taxon>Eukaryota</taxon>
        <taxon>Metazoa</taxon>
        <taxon>Ecdysozoa</taxon>
        <taxon>Nematoda</taxon>
        <taxon>Chromadorea</taxon>
        <taxon>Rhabditida</taxon>
        <taxon>Rhabditina</taxon>
        <taxon>Rhabditomorpha</taxon>
        <taxon>Rhabditoidea</taxon>
        <taxon>Rhabditidae</taxon>
        <taxon>Peloderinae</taxon>
        <taxon>Caenorhabditis</taxon>
    </lineage>
</organism>
<dbReference type="EC" id="4.6.1.2" evidence="1"/>
<dbReference type="EMBL" id="BX284605">
    <property type="protein sequence ID" value="CAB07591.2"/>
    <property type="molecule type" value="Genomic_DNA"/>
</dbReference>
<dbReference type="PIR" id="T21223">
    <property type="entry name" value="T21223"/>
</dbReference>
<dbReference type="RefSeq" id="NP_507101.1">
    <property type="nucleotide sequence ID" value="NM_074700.1"/>
</dbReference>
<dbReference type="SMR" id="O62179"/>
<dbReference type="FunCoup" id="O62179">
    <property type="interactions" value="156"/>
</dbReference>
<dbReference type="STRING" id="6239.F21H7.9.1"/>
<dbReference type="GlyCosmos" id="O62179">
    <property type="glycosylation" value="6 sites, No reported glycans"/>
</dbReference>
<dbReference type="PaxDb" id="6239-F21H7.9"/>
<dbReference type="EnsemblMetazoa" id="F21H7.9.1">
    <property type="protein sequence ID" value="F21H7.9.1"/>
    <property type="gene ID" value="WBGene00001545"/>
</dbReference>
<dbReference type="GeneID" id="184797"/>
<dbReference type="KEGG" id="cel:CELE_F21H7.9"/>
<dbReference type="UCSC" id="F21H7.9">
    <property type="organism name" value="c. elegans"/>
</dbReference>
<dbReference type="AGR" id="WB:WBGene00001545"/>
<dbReference type="CTD" id="184797"/>
<dbReference type="WormBase" id="F21H7.9">
    <property type="protein sequence ID" value="CE28919"/>
    <property type="gene ID" value="WBGene00001545"/>
    <property type="gene designation" value="gcy-20"/>
</dbReference>
<dbReference type="eggNOG" id="KOG1023">
    <property type="taxonomic scope" value="Eukaryota"/>
</dbReference>
<dbReference type="GeneTree" id="ENSGT00970000196659"/>
<dbReference type="HOGENOM" id="CLU_001072_1_3_1"/>
<dbReference type="InParanoid" id="O62179"/>
<dbReference type="OMA" id="ERWVVKI"/>
<dbReference type="OrthoDB" id="302535at2759"/>
<dbReference type="PhylomeDB" id="O62179"/>
<dbReference type="Reactome" id="R-CEL-2514859">
    <property type="pathway name" value="Inactivation, recovery and regulation of the phototransduction cascade"/>
</dbReference>
<dbReference type="PRO" id="PR:O62179"/>
<dbReference type="Proteomes" id="UP000001940">
    <property type="component" value="Chromosome V"/>
</dbReference>
<dbReference type="GO" id="GO:0005886">
    <property type="term" value="C:plasma membrane"/>
    <property type="evidence" value="ECO:0000318"/>
    <property type="project" value="GO_Central"/>
</dbReference>
<dbReference type="GO" id="GO:0005524">
    <property type="term" value="F:ATP binding"/>
    <property type="evidence" value="ECO:0007669"/>
    <property type="project" value="UniProtKB-KW"/>
</dbReference>
<dbReference type="GO" id="GO:0005525">
    <property type="term" value="F:GTP binding"/>
    <property type="evidence" value="ECO:0007669"/>
    <property type="project" value="UniProtKB-KW"/>
</dbReference>
<dbReference type="GO" id="GO:0004383">
    <property type="term" value="F:guanylate cyclase activity"/>
    <property type="evidence" value="ECO:0000318"/>
    <property type="project" value="GO_Central"/>
</dbReference>
<dbReference type="GO" id="GO:0001653">
    <property type="term" value="F:peptide receptor activity"/>
    <property type="evidence" value="ECO:0000318"/>
    <property type="project" value="GO_Central"/>
</dbReference>
<dbReference type="GO" id="GO:0004672">
    <property type="term" value="F:protein kinase activity"/>
    <property type="evidence" value="ECO:0007669"/>
    <property type="project" value="InterPro"/>
</dbReference>
<dbReference type="GO" id="GO:0006182">
    <property type="term" value="P:cGMP biosynthetic process"/>
    <property type="evidence" value="ECO:0000318"/>
    <property type="project" value="GO_Central"/>
</dbReference>
<dbReference type="GO" id="GO:0035556">
    <property type="term" value="P:intracellular signal transduction"/>
    <property type="evidence" value="ECO:0007669"/>
    <property type="project" value="InterPro"/>
</dbReference>
<dbReference type="GO" id="GO:0007168">
    <property type="term" value="P:receptor guanylyl cyclase signaling pathway"/>
    <property type="evidence" value="ECO:0000318"/>
    <property type="project" value="GO_Central"/>
</dbReference>
<dbReference type="CDD" id="cd07302">
    <property type="entry name" value="CHD"/>
    <property type="match status" value="1"/>
</dbReference>
<dbReference type="CDD" id="cd06352">
    <property type="entry name" value="PBP1_NPR_GC-like"/>
    <property type="match status" value="1"/>
</dbReference>
<dbReference type="FunFam" id="1.10.510.10:FF:000704">
    <property type="entry name" value="Guanylate cyclase"/>
    <property type="match status" value="1"/>
</dbReference>
<dbReference type="FunFam" id="3.30.70.1230:FF:000023">
    <property type="entry name" value="Guanylate cyclase"/>
    <property type="match status" value="1"/>
</dbReference>
<dbReference type="FunFam" id="3.40.50.2300:FF:000241">
    <property type="entry name" value="Guanylate cyclase"/>
    <property type="match status" value="1"/>
</dbReference>
<dbReference type="FunFam" id="3.40.50.2300:FF:000547">
    <property type="entry name" value="Guanylate cyclase"/>
    <property type="match status" value="1"/>
</dbReference>
<dbReference type="Gene3D" id="3.40.50.2300">
    <property type="match status" value="2"/>
</dbReference>
<dbReference type="Gene3D" id="3.30.70.1230">
    <property type="entry name" value="Nucleotide cyclase"/>
    <property type="match status" value="1"/>
</dbReference>
<dbReference type="Gene3D" id="1.10.510.10">
    <property type="entry name" value="Transferase(Phosphotransferase) domain 1"/>
    <property type="match status" value="1"/>
</dbReference>
<dbReference type="InterPro" id="IPR001054">
    <property type="entry name" value="A/G_cyclase"/>
</dbReference>
<dbReference type="InterPro" id="IPR018297">
    <property type="entry name" value="A/G_cyclase_CS"/>
</dbReference>
<dbReference type="InterPro" id="IPR001828">
    <property type="entry name" value="ANF_lig-bd_rcpt"/>
</dbReference>
<dbReference type="InterPro" id="IPR050401">
    <property type="entry name" value="Cyclic_nucleotide_synthase"/>
</dbReference>
<dbReference type="InterPro" id="IPR011009">
    <property type="entry name" value="Kinase-like_dom_sf"/>
</dbReference>
<dbReference type="InterPro" id="IPR029787">
    <property type="entry name" value="Nucleotide_cyclase"/>
</dbReference>
<dbReference type="InterPro" id="IPR028082">
    <property type="entry name" value="Peripla_BP_I"/>
</dbReference>
<dbReference type="InterPro" id="IPR000719">
    <property type="entry name" value="Prot_kinase_dom"/>
</dbReference>
<dbReference type="InterPro" id="IPR001245">
    <property type="entry name" value="Ser-Thr/Tyr_kinase_cat_dom"/>
</dbReference>
<dbReference type="PANTHER" id="PTHR11920">
    <property type="entry name" value="GUANYLYL CYCLASE"/>
    <property type="match status" value="1"/>
</dbReference>
<dbReference type="PANTHER" id="PTHR11920:SF40">
    <property type="entry name" value="RECEPTOR-TYPE GUANYLATE CYCLASE GCY-14-RELATED"/>
    <property type="match status" value="1"/>
</dbReference>
<dbReference type="Pfam" id="PF01094">
    <property type="entry name" value="ANF_receptor"/>
    <property type="match status" value="1"/>
</dbReference>
<dbReference type="Pfam" id="PF00211">
    <property type="entry name" value="Guanylate_cyc"/>
    <property type="match status" value="1"/>
</dbReference>
<dbReference type="Pfam" id="PF07714">
    <property type="entry name" value="PK_Tyr_Ser-Thr"/>
    <property type="match status" value="1"/>
</dbReference>
<dbReference type="SMART" id="SM00044">
    <property type="entry name" value="CYCc"/>
    <property type="match status" value="1"/>
</dbReference>
<dbReference type="SUPFAM" id="SSF55073">
    <property type="entry name" value="Nucleotide cyclase"/>
    <property type="match status" value="1"/>
</dbReference>
<dbReference type="SUPFAM" id="SSF53822">
    <property type="entry name" value="Periplasmic binding protein-like I"/>
    <property type="match status" value="1"/>
</dbReference>
<dbReference type="SUPFAM" id="SSF56112">
    <property type="entry name" value="Protein kinase-like (PK-like)"/>
    <property type="match status" value="1"/>
</dbReference>
<dbReference type="PROSITE" id="PS00452">
    <property type="entry name" value="GUANYLATE_CYCLASE_1"/>
    <property type="match status" value="1"/>
</dbReference>
<dbReference type="PROSITE" id="PS50125">
    <property type="entry name" value="GUANYLATE_CYCLASE_2"/>
    <property type="match status" value="1"/>
</dbReference>
<dbReference type="PROSITE" id="PS50011">
    <property type="entry name" value="PROTEIN_KINASE_DOM"/>
    <property type="match status" value="1"/>
</dbReference>
<comment type="function">
    <text evidence="1">Guanylate cyclase involved in the production of the second messenger cGMP (By similarity).</text>
</comment>
<comment type="catalytic activity">
    <reaction evidence="1">
        <text>GTP = 3',5'-cyclic GMP + diphosphate</text>
        <dbReference type="Rhea" id="RHEA:13665"/>
        <dbReference type="ChEBI" id="CHEBI:33019"/>
        <dbReference type="ChEBI" id="CHEBI:37565"/>
        <dbReference type="ChEBI" id="CHEBI:57746"/>
        <dbReference type="EC" id="4.6.1.2"/>
    </reaction>
</comment>
<comment type="subcellular location">
    <subcellularLocation>
        <location evidence="8">Cell membrane</location>
        <topology evidence="8">Single-pass type I membrane protein</topology>
    </subcellularLocation>
</comment>
<comment type="tissue specificity">
    <text evidence="7">Expressed asymmetrically in ASE left (ASEL) sensory neuron. Expressed in excretory gland and canal cell.</text>
</comment>
<comment type="domain">
    <text evidence="4">The protein kinase domain is predicted to be catalytically inactive.</text>
</comment>
<comment type="similarity">
    <text evidence="3">Belongs to the adenylyl cyclase class-4/guanylyl cyclase family.</text>
</comment>
<feature type="signal peptide" evidence="2">
    <location>
        <begin position="1"/>
        <end position="15"/>
    </location>
</feature>
<feature type="chain" id="PRO_0000433289" description="Receptor-type guanylate cyclase gcy-20" evidence="2">
    <location>
        <begin position="16"/>
        <end position="1108"/>
    </location>
</feature>
<feature type="topological domain" description="Extracellular" evidence="2">
    <location>
        <begin position="16"/>
        <end position="474"/>
    </location>
</feature>
<feature type="transmembrane region" description="Helical" evidence="2">
    <location>
        <begin position="475"/>
        <end position="495"/>
    </location>
</feature>
<feature type="topological domain" description="Cytoplasmic" evidence="2">
    <location>
        <begin position="496"/>
        <end position="1108"/>
    </location>
</feature>
<feature type="domain" description="Protein kinase" evidence="4">
    <location>
        <begin position="483"/>
        <end position="803"/>
    </location>
</feature>
<feature type="domain" description="Guanylate cyclase" evidence="3">
    <location>
        <begin position="876"/>
        <end position="1006"/>
    </location>
</feature>
<feature type="region of interest" description="Disordered" evidence="6">
    <location>
        <begin position="1083"/>
        <end position="1108"/>
    </location>
</feature>
<feature type="compositionally biased region" description="Polar residues" evidence="6">
    <location>
        <begin position="1089"/>
        <end position="1108"/>
    </location>
</feature>
<feature type="binding site" evidence="4">
    <location>
        <begin position="489"/>
        <end position="497"/>
    </location>
    <ligand>
        <name>ATP</name>
        <dbReference type="ChEBI" id="CHEBI:30616"/>
    </ligand>
</feature>
<feature type="binding site" evidence="4">
    <location>
        <position position="571"/>
    </location>
    <ligand>
        <name>ATP</name>
        <dbReference type="ChEBI" id="CHEBI:30616"/>
    </ligand>
</feature>
<feature type="glycosylation site" description="N-linked (GlcNAc...) asparagine" evidence="5">
    <location>
        <position position="66"/>
    </location>
</feature>
<feature type="glycosylation site" description="N-linked (GlcNAc...) asparagine" evidence="5">
    <location>
        <position position="131"/>
    </location>
</feature>
<feature type="glycosylation site" description="N-linked (GlcNAc...) asparagine" evidence="5">
    <location>
        <position position="319"/>
    </location>
</feature>
<feature type="glycosylation site" description="N-linked (GlcNAc...) asparagine" evidence="5">
    <location>
        <position position="341"/>
    </location>
</feature>
<feature type="glycosylation site" description="N-linked (GlcNAc...) asparagine" evidence="5">
    <location>
        <position position="366"/>
    </location>
</feature>
<feature type="glycosylation site" description="N-linked (GlcNAc...) asparagine" evidence="5">
    <location>
        <position position="380"/>
    </location>
</feature>
<evidence type="ECO:0000250" key="1">
    <source>
        <dbReference type="UniProtKB" id="Q19187"/>
    </source>
</evidence>
<evidence type="ECO:0000255" key="2"/>
<evidence type="ECO:0000255" key="3">
    <source>
        <dbReference type="PROSITE-ProRule" id="PRU00099"/>
    </source>
</evidence>
<evidence type="ECO:0000255" key="4">
    <source>
        <dbReference type="PROSITE-ProRule" id="PRU00159"/>
    </source>
</evidence>
<evidence type="ECO:0000255" key="5">
    <source>
        <dbReference type="PROSITE-ProRule" id="PRU00498"/>
    </source>
</evidence>
<evidence type="ECO:0000256" key="6">
    <source>
        <dbReference type="SAM" id="MobiDB-lite"/>
    </source>
</evidence>
<evidence type="ECO:0000269" key="7">
    <source>
    </source>
</evidence>
<evidence type="ECO:0000305" key="8"/>
<evidence type="ECO:0000312" key="9">
    <source>
        <dbReference type="EMBL" id="CAB07591.2"/>
    </source>
</evidence>
<evidence type="ECO:0000312" key="10">
    <source>
        <dbReference type="Proteomes" id="UP000001940"/>
    </source>
</evidence>
<evidence type="ECO:0000312" key="11">
    <source>
        <dbReference type="WormBase" id="F21H7.9"/>
    </source>
</evidence>
<name>GCY20_CAEEL</name>
<gene>
    <name evidence="11" type="primary">gcy-20</name>
    <name evidence="11" type="synonym">gcy-16</name>
    <name evidence="9" type="ORF">F21H7.9</name>
</gene>
<keyword id="KW-0067">ATP-binding</keyword>
<keyword id="KW-1003">Cell membrane</keyword>
<keyword id="KW-0141">cGMP biosynthesis</keyword>
<keyword id="KW-0325">Glycoprotein</keyword>
<keyword id="KW-0342">GTP-binding</keyword>
<keyword id="KW-0456">Lyase</keyword>
<keyword id="KW-0472">Membrane</keyword>
<keyword id="KW-0547">Nucleotide-binding</keyword>
<keyword id="KW-0675">Receptor</keyword>
<keyword id="KW-1185">Reference proteome</keyword>
<keyword id="KW-0732">Signal</keyword>
<keyword id="KW-0812">Transmembrane</keyword>
<keyword id="KW-1133">Transmembrane helix</keyword>
<sequence>MRILLLLLQNILVFCQFLQTIKVGLMFSKDTASVIRSVGYRTSAAAVLVAKDRIRAEHLLDQYDFNFTIKFDECSESLAAGKVVELLTHDNVDVIIGPTCNRAGVAVASLADFYNVPVFQWGLTTTADIGNFSRYQTTVTLSLDTHSISLAVREILRQYGWSEFVFIYSNDGDEEKCAAMKDDMEKMGIENSDVTMAYMIQIQTVTMESLQRTLLEVSKRGRIIIACFASGRGFKKAFIASTVLAGMSTEEYLYVFAEPQSRGFYVDEADGKVHYSWDDTDGQLVTGLTNEQIRDAYGKVLYICDNMGEPTTITTQYTNFTSQVISRMAEQPFNCVQDCSNQSYKHAATYAGQLADSFYAYAFALNKSLTQDPTRSNLKNGSFVLSNIGMTFQGVGGEAVTLDESGSRIVQVYMFAMNSSLLPYMAASLLVNVSEVVFTPFYKSESELWSVRPLSRPKCGFTGLECPADFVKEYLVYTIIAAFIVILALLAGCAGLLYTMHMKRKEMERQDLLWQVAFVELQQVQSKSRAEASMHSFASGPSTSTKMTVESRTETTNFIFYHYHQEVVAAKKHDLLVLFDANQKSEFRQMRNFDNDNLNKFIGLCLDGPQLLSLWRFCSRGSLSDVISKSSMQMDSFFMFSLIRDISNGLYFIHSSFLKCHGQLTSRCCLIDDRWQIKISGFGLKSVRTFENPKKEDLLWASPEYLRNEDQERLPEGDIYSFGIICAEILTRSSAFDLENRKEKPDVIIYQVKKGGHNPTRPSLDTGETVVINPALLHLVRDCWTERPSERPSIEQVRSHLNGMKDGRKTNLMDHVFNMLETYASTLEEEVSDRTKELTEEKKKSDVLLYRMLPRMVADKLKLGQTVEPETFEQVTIFFSDVVQFTTLAGKCTPLQVVTLLNDLYTIFDGIIEQNDVYKVETIGDGYLCVSGLPHRNGNDHIRHIARMSLGFLSSLEFFRVQHLPAERINLRIGINCGSVVAGVVGLTMPRYCLFGDAVNTASRMESNGKPGQIHVTAEANRMLTQVVGGFRTESRGEVIIKGKGVMETFWLLGEESGYTAPSKAAPKVIQHRQSIRSISPILEKNAEGSETSSLSVDQAGDNNSETV</sequence>
<accession>O62179</accession>
<proteinExistence type="evidence at transcript level"/>
<reference evidence="10" key="1">
    <citation type="journal article" date="1998" name="Science">
        <title>Genome sequence of the nematode C. elegans: a platform for investigating biology.</title>
        <authorList>
            <consortium name="The C. elegans sequencing consortium"/>
        </authorList>
    </citation>
    <scope>NUCLEOTIDE SEQUENCE [LARGE SCALE GENOMIC DNA]</scope>
    <source>
        <strain evidence="10">Bristol N2</strain>
    </source>
</reference>
<reference evidence="8" key="2">
    <citation type="journal article" date="2009" name="Curr. Biol.">
        <title>Lateralized gustatory behavior of C. elegans is controlled by specific receptor-type guanylyl cyclases.</title>
        <authorList>
            <person name="Ortiz C.O."/>
            <person name="Faumont S."/>
            <person name="Takayama J."/>
            <person name="Ahmed H.K."/>
            <person name="Goldsmith A.D."/>
            <person name="Pocock R."/>
            <person name="McCormick K.E."/>
            <person name="Kunimoto H."/>
            <person name="Iino Y."/>
            <person name="Lockery S."/>
            <person name="Hobert O."/>
        </authorList>
    </citation>
    <scope>TISSUE SPECIFICITY</scope>
</reference>